<comment type="function">
    <text evidence="1 2 3 5 6 7 8">Catalyzes the transport of 2-oxoglutarate (alpha-oxoglutarate) across the inner mitochondrial membrane in an electroneutral exchange for malate (PubMed:27479487, PubMed:3814587, PubMed:8363582). Can also exchange 2-oxoglutarate for other dicarboxylic acids such as malonate, succinate, maleate and oxaloacetate, although with lower affinity (PubMed:8363582). Contributes to several metabolic processes, including the malate-aspartate shuttle, the oxoglutarate/isocitrate shuttle, in gluconeogenesis from lactate, and in nitrogen metabolism (PubMed:14598172). Maintains mitochondrial fusion and fission events, and the organization and morphology of cristae (By similarity). Involved in the regulation of apoptosis (By similarity). Helps protect from cytotoxic-induced apoptosis by modulating glutathione levels in mitochondria (By similarity).</text>
</comment>
<comment type="catalytic activity">
    <reaction evidence="7 11 12 13">
        <text>(S)-malate(in) + 2-oxoglutarate(out) = (S)-malate(out) + 2-oxoglutarate(in)</text>
        <dbReference type="Rhea" id="RHEA:71587"/>
        <dbReference type="ChEBI" id="CHEBI:15589"/>
        <dbReference type="ChEBI" id="CHEBI:16810"/>
    </reaction>
</comment>
<comment type="catalytic activity">
    <reaction evidence="7">
        <text>malonate(in) + 2-oxoglutarate(out) = malonate(out) + 2-oxoglutarate(in)</text>
        <dbReference type="Rhea" id="RHEA:71591"/>
        <dbReference type="ChEBI" id="CHEBI:15792"/>
        <dbReference type="ChEBI" id="CHEBI:16810"/>
    </reaction>
</comment>
<comment type="catalytic activity">
    <reaction evidence="7">
        <text>succinate(in) + 2-oxoglutarate(out) = succinate(out) + 2-oxoglutarate(in)</text>
        <dbReference type="Rhea" id="RHEA:71595"/>
        <dbReference type="ChEBI" id="CHEBI:16810"/>
        <dbReference type="ChEBI" id="CHEBI:30031"/>
    </reaction>
</comment>
<comment type="catalytic activity">
    <reaction evidence="7">
        <text>maleate(in) + 2-oxoglutarate(out) = maleate(out) + 2-oxoglutarate(in)</text>
        <dbReference type="Rhea" id="RHEA:71599"/>
        <dbReference type="ChEBI" id="CHEBI:16810"/>
        <dbReference type="ChEBI" id="CHEBI:30780"/>
    </reaction>
</comment>
<comment type="catalytic activity">
    <reaction evidence="7">
        <text>oxaloacetate(in) + 2-oxoglutarate(out) = oxaloacetate(out) + 2-oxoglutarate(in)</text>
        <dbReference type="Rhea" id="RHEA:71603"/>
        <dbReference type="ChEBI" id="CHEBI:16452"/>
        <dbReference type="ChEBI" id="CHEBI:16810"/>
    </reaction>
</comment>
<comment type="subunit">
    <text evidence="2">Interacts with SMIM26.</text>
</comment>
<comment type="subcellular location">
    <subcellularLocation>
        <location evidence="1">Mitochondrion inner membrane</location>
        <topology evidence="4">Multi-pass membrane protein</topology>
    </subcellularLocation>
</comment>
<comment type="tissue specificity">
    <text>Heart, liver and brain.</text>
</comment>
<comment type="PTM">
    <text>The N-terminus is blocked.</text>
</comment>
<comment type="similarity">
    <text evidence="10">Belongs to the mitochondrial carrier (TC 2.A.29) family.</text>
</comment>
<reference key="1">
    <citation type="journal article" date="1992" name="DNA Seq.">
        <title>Sequences of the human and bovine genes for the mitochondrial 2-oxoglutarate carrier.</title>
        <authorList>
            <person name="Iacobazzi V."/>
            <person name="Palmieri F."/>
            <person name="Runswick M.J."/>
            <person name="Walker J.E."/>
        </authorList>
    </citation>
    <scope>NUCLEOTIDE SEQUENCE [GENOMIC DNA]</scope>
</reference>
<reference key="2">
    <citation type="journal article" date="1990" name="Biochemistry">
        <title>Sequence of the bovine 2-oxoglutarate/malate carrier protein: structural relationship to other mitochondrial transport proteins.</title>
        <authorList>
            <person name="Runswick M.J."/>
            <person name="Walker J.E."/>
            <person name="Bisaccia F."/>
            <person name="Iacobazzi V."/>
            <person name="Palmieri F."/>
        </authorList>
    </citation>
    <scope>NUCLEOTIDE SEQUENCE [MRNA]</scope>
    <scope>PARTIAL PROTEIN SEQUENCE</scope>
    <source>
        <tissue>Heart</tissue>
    </source>
</reference>
<reference key="3">
    <citation type="journal article" date="2005" name="BMC Genomics">
        <title>Characterization of 954 bovine full-CDS cDNA sequences.</title>
        <authorList>
            <person name="Harhay G.P."/>
            <person name="Sonstegard T.S."/>
            <person name="Keele J.W."/>
            <person name="Heaton M.P."/>
            <person name="Clawson M.L."/>
            <person name="Snelling W.M."/>
            <person name="Wiedmann R.T."/>
            <person name="Van Tassell C.P."/>
            <person name="Smith T.P.L."/>
        </authorList>
    </citation>
    <scope>NUCLEOTIDE SEQUENCE [LARGE SCALE MRNA]</scope>
</reference>
<reference key="4">
    <citation type="submission" date="2007-06" db="EMBL/GenBank/DDBJ databases">
        <authorList>
            <consortium name="NIH - Mammalian Gene Collection (MGC) project"/>
        </authorList>
    </citation>
    <scope>NUCLEOTIDE SEQUENCE [LARGE SCALE MRNA]</scope>
    <source>
        <strain>Hereford</strain>
        <tissue>Fetal pons</tissue>
        <tissue>Hypothalamus</tissue>
    </source>
</reference>
<reference key="5">
    <citation type="journal article" date="1987" name="Biochim. Biophys. Acta">
        <title>Kinetics of the reconstituted 2-oxoglutarate carrier from bovine heart mitochondria.</title>
        <authorList>
            <person name="Indiveri C."/>
            <person name="Palmieri F."/>
            <person name="Bisaccia F."/>
            <person name="Kraemer R."/>
        </authorList>
    </citation>
    <scope>FUNCTION</scope>
    <scope>TRANSPORT ACTIVITY</scope>
</reference>
<reference key="6">
    <citation type="journal article" date="1993" name="Biochem. J.">
        <title>Abundant bacterial expression and reconstitution of an intrinsic membrane-transport protein from bovine mitochondria.</title>
        <authorList>
            <person name="Fiermonte G."/>
            <person name="Walker J.E."/>
            <person name="Palmieri F."/>
        </authorList>
    </citation>
    <scope>FUNCTION</scope>
    <scope>TRANSPORT ACTIVITY</scope>
</reference>
<reference key="7">
    <citation type="journal article" date="2004" name="Pflugers Arch.">
        <title>The mitochondrial transporter family (SLC25): physiological and pathological implications.</title>
        <authorList>
            <person name="Palmieri F."/>
        </authorList>
    </citation>
    <scope>FUNCTION</scope>
</reference>
<reference key="8">
    <citation type="journal article" date="2016" name="Biochim. Biophys. Acta">
        <title>New insights about the structural rearrangements required for substrate translocation in the bovine mitochondrial oxoglutarate carrier.</title>
        <authorList>
            <person name="Curcio R."/>
            <person name="Muto L."/>
            <person name="Pierri C.L."/>
            <person name="Montalto A."/>
            <person name="Lauria G."/>
            <person name="Onofrio A."/>
            <person name="Fiorillo M."/>
            <person name="Fiermonte G."/>
            <person name="Lunetti P."/>
            <person name="Vozza A."/>
            <person name="Capobianco L."/>
            <person name="Cappello A.R."/>
            <person name="Dolce V."/>
        </authorList>
    </citation>
    <scope>FUNCTION</scope>
    <scope>TRANSPORT ACTIVITY</scope>
</reference>
<feature type="initiator methionine" description="Removed" evidence="2">
    <location>
        <position position="1"/>
    </location>
</feature>
<feature type="chain" id="PRO_0000090624" description="Mitochondrial 2-oxoglutarate/malate carrier protein">
    <location>
        <begin position="2"/>
        <end position="314"/>
    </location>
</feature>
<feature type="transmembrane region" description="Helical; Name=1" evidence="4">
    <location>
        <begin position="24"/>
        <end position="42"/>
    </location>
</feature>
<feature type="transmembrane region" description="Helical; Name=2" evidence="4">
    <location>
        <begin position="83"/>
        <end position="101"/>
    </location>
</feature>
<feature type="transmembrane region" description="Helical; Name=3" evidence="4">
    <location>
        <begin position="119"/>
        <end position="140"/>
    </location>
</feature>
<feature type="transmembrane region" description="Helical; Name=4" evidence="4">
    <location>
        <begin position="183"/>
        <end position="202"/>
    </location>
</feature>
<feature type="transmembrane region" description="Helical; Name=5" evidence="4">
    <location>
        <begin position="222"/>
        <end position="240"/>
    </location>
</feature>
<feature type="transmembrane region" description="Helical; Name=6" evidence="4">
    <location>
        <begin position="281"/>
        <end position="300"/>
    </location>
</feature>
<feature type="repeat" description="Solcar 1">
    <location>
        <begin position="23"/>
        <end position="108"/>
    </location>
</feature>
<feature type="repeat" description="Solcar 2">
    <location>
        <begin position="117"/>
        <end position="208"/>
    </location>
</feature>
<feature type="repeat" description="Solcar 3">
    <location>
        <begin position="217"/>
        <end position="306"/>
    </location>
</feature>
<feature type="modified residue" description="N-acetylalanine" evidence="2">
    <location>
        <position position="2"/>
    </location>
</feature>
<feature type="modified residue" description="Phosphoserine" evidence="2">
    <location>
        <position position="6"/>
    </location>
</feature>
<feature type="modified residue" description="N6-succinyllysine" evidence="3">
    <location>
        <position position="57"/>
    </location>
</feature>
<feature type="modified residue" description="Phosphotyrosine" evidence="3">
    <location>
        <position position="102"/>
    </location>
</feature>
<feature type="modified residue" description="N6-acetyllysine" evidence="3">
    <location>
        <position position="256"/>
    </location>
</feature>
<proteinExistence type="evidence at protein level"/>
<protein>
    <recommendedName>
        <fullName evidence="9">Mitochondrial 2-oxoglutarate/malate carrier protein</fullName>
        <shortName>OGCP</shortName>
        <shortName>alpha-oxoglutarate carrier</shortName>
    </recommendedName>
    <alternativeName>
        <fullName>Solute carrier family 25 member 11</fullName>
        <shortName>SLC25A11</shortName>
    </alternativeName>
</protein>
<name>M2OM_BOVIN</name>
<evidence type="ECO:0000250" key="1">
    <source>
        <dbReference type="UniProtKB" id="P97700"/>
    </source>
</evidence>
<evidence type="ECO:0000250" key="2">
    <source>
        <dbReference type="UniProtKB" id="Q02978"/>
    </source>
</evidence>
<evidence type="ECO:0000250" key="3">
    <source>
        <dbReference type="UniProtKB" id="Q9CR62"/>
    </source>
</evidence>
<evidence type="ECO:0000255" key="4"/>
<evidence type="ECO:0000269" key="5">
    <source>
    </source>
</evidence>
<evidence type="ECO:0000269" key="6">
    <source>
    </source>
</evidence>
<evidence type="ECO:0000269" key="7">
    <source>
    </source>
</evidence>
<evidence type="ECO:0000303" key="8">
    <source>
    </source>
</evidence>
<evidence type="ECO:0000303" key="9">
    <source>
    </source>
</evidence>
<evidence type="ECO:0000305" key="10"/>
<evidence type="ECO:0000305" key="11">
    <source>
    </source>
</evidence>
<evidence type="ECO:0000305" key="12">
    <source>
    </source>
</evidence>
<evidence type="ECO:0000305" key="13">
    <source>
    </source>
</evidence>
<gene>
    <name type="primary">SLC25A11</name>
    <name type="synonym">SLC20A4</name>
</gene>
<sequence length="314" mass="34172">MAATASPGASGMDGKPRTSPKSVKFLFGGLAGMGATVFVQPLDLVKNRMQLSGEGAKTREYKTSFHALISILRAEGLRGIYTGLSAGLLRQATYTTTRLGIYTVLFERLTGADGTPPGFLLKAVIGMTAGATGAFVGTPAEVALIRMTADGRLPVDQRRGYKNVFNALFRIVQEEGVPTLWRGCIPTMARAVVVNAAQLASYSQSKQFLLDSGYFSDNILCHFCASMISGLVTTAASMPVDIVKTRIQNMRMIDGKPEYKNGLDVLVKVVRYEGFFSLWKGFTPYYARLGPHTVLTFIFLEQMNKAYKRLFLSG</sequence>
<accession>P22292</accession>
<accession>A5PJY2</accession>
<accession>Q5E9W4</accession>
<dbReference type="EMBL" id="X66115">
    <property type="protein sequence ID" value="CAA46906.1"/>
    <property type="molecule type" value="Genomic_DNA"/>
</dbReference>
<dbReference type="EMBL" id="M58703">
    <property type="protein sequence ID" value="AAA30671.1"/>
    <property type="molecule type" value="mRNA"/>
</dbReference>
<dbReference type="EMBL" id="M60662">
    <property type="protein sequence ID" value="AAA30672.1"/>
    <property type="molecule type" value="mRNA"/>
</dbReference>
<dbReference type="EMBL" id="BT020806">
    <property type="protein sequence ID" value="AAX08823.1"/>
    <property type="molecule type" value="mRNA"/>
</dbReference>
<dbReference type="EMBL" id="BC142283">
    <property type="protein sequence ID" value="AAI42284.1"/>
    <property type="molecule type" value="mRNA"/>
</dbReference>
<dbReference type="EMBL" id="BC146129">
    <property type="protein sequence ID" value="AAI46130.1"/>
    <property type="molecule type" value="mRNA"/>
</dbReference>
<dbReference type="PIR" id="A36305">
    <property type="entry name" value="A36305"/>
</dbReference>
<dbReference type="RefSeq" id="NP_777096.1">
    <property type="nucleotide sequence ID" value="NM_174671.2"/>
</dbReference>
<dbReference type="SMR" id="P22292"/>
<dbReference type="FunCoup" id="P22292">
    <property type="interactions" value="1792"/>
</dbReference>
<dbReference type="STRING" id="9913.ENSBTAP00000035103"/>
<dbReference type="TCDB" id="2.A.29.2.1">
    <property type="family name" value="the mitochondrial carrier (mc) family"/>
</dbReference>
<dbReference type="PaxDb" id="9913-ENSBTAP00000035103"/>
<dbReference type="PeptideAtlas" id="P22292"/>
<dbReference type="Ensembl" id="ENSBTAT00000079666.2">
    <property type="protein sequence ID" value="ENSBTAP00000065358.1"/>
    <property type="gene ID" value="ENSBTAG00000004910.7"/>
</dbReference>
<dbReference type="GeneID" id="282523"/>
<dbReference type="KEGG" id="bta:282523"/>
<dbReference type="CTD" id="8402"/>
<dbReference type="VEuPathDB" id="HostDB:ENSBTAG00000004910"/>
<dbReference type="VGNC" id="VGNC:34742">
    <property type="gene designation" value="SLC25A11"/>
</dbReference>
<dbReference type="eggNOG" id="KOG0759">
    <property type="taxonomic scope" value="Eukaryota"/>
</dbReference>
<dbReference type="GeneTree" id="ENSGT00940000158465"/>
<dbReference type="HOGENOM" id="CLU_015166_14_1_1"/>
<dbReference type="InParanoid" id="P22292"/>
<dbReference type="OMA" id="TLWRGAI"/>
<dbReference type="OrthoDB" id="448427at2759"/>
<dbReference type="TreeFam" id="TF354262"/>
<dbReference type="Reactome" id="R-BTA-428643">
    <property type="pathway name" value="Organic anion transporters"/>
</dbReference>
<dbReference type="Reactome" id="R-BTA-9856872">
    <property type="pathway name" value="Malate-aspartate shuttle"/>
</dbReference>
<dbReference type="Proteomes" id="UP000009136">
    <property type="component" value="Chromosome 19"/>
</dbReference>
<dbReference type="Bgee" id="ENSBTAG00000004910">
    <property type="expression patterns" value="Expressed in infraspinatus muscle and 105 other cell types or tissues"/>
</dbReference>
<dbReference type="GO" id="GO:0005743">
    <property type="term" value="C:mitochondrial inner membrane"/>
    <property type="evidence" value="ECO:0000250"/>
    <property type="project" value="AgBase"/>
</dbReference>
<dbReference type="GO" id="GO:0005739">
    <property type="term" value="C:mitochondrion"/>
    <property type="evidence" value="ECO:0000250"/>
    <property type="project" value="AgBase"/>
</dbReference>
<dbReference type="GO" id="GO:0015367">
    <property type="term" value="F:oxoglutarate:malate antiporter activity"/>
    <property type="evidence" value="ECO:0007669"/>
    <property type="project" value="Ensembl"/>
</dbReference>
<dbReference type="GO" id="GO:0022857">
    <property type="term" value="F:transmembrane transporter activity"/>
    <property type="evidence" value="ECO:0000318"/>
    <property type="project" value="GO_Central"/>
</dbReference>
<dbReference type="GO" id="GO:0006094">
    <property type="term" value="P:gluconeogenesis"/>
    <property type="evidence" value="ECO:0007669"/>
    <property type="project" value="Ensembl"/>
</dbReference>
<dbReference type="GO" id="GO:0006869">
    <property type="term" value="P:lipid transport"/>
    <property type="evidence" value="ECO:0007669"/>
    <property type="project" value="UniProtKB-KW"/>
</dbReference>
<dbReference type="GO" id="GO:0043490">
    <property type="term" value="P:malate-aspartate shuttle"/>
    <property type="evidence" value="ECO:0007669"/>
    <property type="project" value="Ensembl"/>
</dbReference>
<dbReference type="FunFam" id="1.50.40.10:FF:000013">
    <property type="entry name" value="Mitochondrial 2-oxoglutarate/malate carrier protein-like protein"/>
    <property type="match status" value="1"/>
</dbReference>
<dbReference type="Gene3D" id="1.50.40.10">
    <property type="entry name" value="Mitochondrial carrier domain"/>
    <property type="match status" value="1"/>
</dbReference>
<dbReference type="InterPro" id="IPR050391">
    <property type="entry name" value="Mito_Metabolite_Transporter"/>
</dbReference>
<dbReference type="InterPro" id="IPR018108">
    <property type="entry name" value="Mitochondrial_sb/sol_carrier"/>
</dbReference>
<dbReference type="InterPro" id="IPR023395">
    <property type="entry name" value="Mt_carrier_dom_sf"/>
</dbReference>
<dbReference type="PANTHER" id="PTHR45618">
    <property type="entry name" value="MITOCHONDRIAL DICARBOXYLATE CARRIER-RELATED"/>
    <property type="match status" value="1"/>
</dbReference>
<dbReference type="Pfam" id="PF00153">
    <property type="entry name" value="Mito_carr"/>
    <property type="match status" value="3"/>
</dbReference>
<dbReference type="SUPFAM" id="SSF103506">
    <property type="entry name" value="Mitochondrial carrier"/>
    <property type="match status" value="1"/>
</dbReference>
<dbReference type="PROSITE" id="PS50920">
    <property type="entry name" value="SOLCAR"/>
    <property type="match status" value="3"/>
</dbReference>
<organism>
    <name type="scientific">Bos taurus</name>
    <name type="common">Bovine</name>
    <dbReference type="NCBI Taxonomy" id="9913"/>
    <lineage>
        <taxon>Eukaryota</taxon>
        <taxon>Metazoa</taxon>
        <taxon>Chordata</taxon>
        <taxon>Craniata</taxon>
        <taxon>Vertebrata</taxon>
        <taxon>Euteleostomi</taxon>
        <taxon>Mammalia</taxon>
        <taxon>Eutheria</taxon>
        <taxon>Laurasiatheria</taxon>
        <taxon>Artiodactyla</taxon>
        <taxon>Ruminantia</taxon>
        <taxon>Pecora</taxon>
        <taxon>Bovidae</taxon>
        <taxon>Bovinae</taxon>
        <taxon>Bos</taxon>
    </lineage>
</organism>
<keyword id="KW-0007">Acetylation</keyword>
<keyword id="KW-0050">Antiport</keyword>
<keyword id="KW-0903">Direct protein sequencing</keyword>
<keyword id="KW-0445">Lipid transport</keyword>
<keyword id="KW-0472">Membrane</keyword>
<keyword id="KW-0496">Mitochondrion</keyword>
<keyword id="KW-0999">Mitochondrion inner membrane</keyword>
<keyword id="KW-0597">Phosphoprotein</keyword>
<keyword id="KW-1185">Reference proteome</keyword>
<keyword id="KW-0677">Repeat</keyword>
<keyword id="KW-0812">Transmembrane</keyword>
<keyword id="KW-1133">Transmembrane helix</keyword>
<keyword id="KW-0813">Transport</keyword>